<proteinExistence type="evidence at protein level"/>
<dbReference type="EMBL" id="AF040707">
    <property type="protein sequence ID" value="AAC62535.1"/>
    <property type="molecule type" value="mRNA"/>
</dbReference>
<dbReference type="EMBL" id="AF040708">
    <property type="protein sequence ID" value="AAC62536.1"/>
    <property type="molecule type" value="mRNA"/>
</dbReference>
<dbReference type="EMBL" id="AK292196">
    <property type="protein sequence ID" value="BAF84885.1"/>
    <property type="molecule type" value="mRNA"/>
</dbReference>
<dbReference type="EMBL" id="CR542035">
    <property type="protein sequence ID" value="CAG46832.1"/>
    <property type="molecule type" value="mRNA"/>
</dbReference>
<dbReference type="EMBL" id="AC002481">
    <property type="protein sequence ID" value="AAB67310.1"/>
    <property type="molecule type" value="Genomic_DNA"/>
</dbReference>
<dbReference type="EMBL" id="CH471055">
    <property type="protein sequence ID" value="EAW65106.1"/>
    <property type="molecule type" value="Genomic_DNA"/>
</dbReference>
<dbReference type="EMBL" id="CH471055">
    <property type="protein sequence ID" value="EAW65107.1"/>
    <property type="molecule type" value="Genomic_DNA"/>
</dbReference>
<dbReference type="EMBL" id="BC021984">
    <property type="protein sequence ID" value="AAH21984.1"/>
    <property type="molecule type" value="mRNA"/>
</dbReference>
<dbReference type="EMBL" id="BC056861">
    <property type="protein sequence ID" value="AAH56861.1"/>
    <property type="molecule type" value="mRNA"/>
</dbReference>
<dbReference type="CCDS" id="CCDS2826.1">
    <molecule id="Q8WTW4-1"/>
</dbReference>
<dbReference type="RefSeq" id="NP_006536.3">
    <molecule id="Q8WTW4-1"/>
    <property type="nucleotide sequence ID" value="NM_006545.4"/>
</dbReference>
<dbReference type="PDB" id="6CES">
    <property type="method" value="EM"/>
    <property type="resolution" value="4.00 A"/>
    <property type="chains" value="N=1-380"/>
</dbReference>
<dbReference type="PDB" id="6CET">
    <property type="method" value="EM"/>
    <property type="resolution" value="4.40 A"/>
    <property type="chains" value="N=1-380"/>
</dbReference>
<dbReference type="PDB" id="7T3A">
    <property type="method" value="EM"/>
    <property type="resolution" value="4.00 A"/>
    <property type="chains" value="B=1-380"/>
</dbReference>
<dbReference type="PDB" id="7T3B">
    <property type="method" value="EM"/>
    <property type="resolution" value="3.90 A"/>
    <property type="chains" value="B=1-380"/>
</dbReference>
<dbReference type="PDB" id="7T3C">
    <property type="method" value="EM"/>
    <property type="resolution" value="4.00 A"/>
    <property type="chains" value="B=1-380"/>
</dbReference>
<dbReference type="PDB" id="8FW5">
    <property type="method" value="EM"/>
    <property type="resolution" value="3.08 A"/>
    <property type="chains" value="B=1-380"/>
</dbReference>
<dbReference type="PDBsum" id="6CES"/>
<dbReference type="PDBsum" id="6CET"/>
<dbReference type="PDBsum" id="7T3A"/>
<dbReference type="PDBsum" id="7T3B"/>
<dbReference type="PDBsum" id="7T3C"/>
<dbReference type="PDBsum" id="8FW5"/>
<dbReference type="EMDB" id="EMD-25652"/>
<dbReference type="EMDB" id="EMD-25653"/>
<dbReference type="EMDB" id="EMD-25654"/>
<dbReference type="EMDB" id="EMD-29497"/>
<dbReference type="EMDB" id="EMD-7464"/>
<dbReference type="EMDB" id="EMD-7465"/>
<dbReference type="SMR" id="Q8WTW4"/>
<dbReference type="BioGRID" id="115885">
    <property type="interactions" value="137"/>
</dbReference>
<dbReference type="ComplexPortal" id="CPX-6226">
    <property type="entry name" value="GATOR1 complex"/>
</dbReference>
<dbReference type="CORUM" id="Q8WTW4"/>
<dbReference type="DIP" id="DIP-50746N"/>
<dbReference type="FunCoup" id="Q8WTW4">
    <property type="interactions" value="552"/>
</dbReference>
<dbReference type="IntAct" id="Q8WTW4">
    <property type="interactions" value="54"/>
</dbReference>
<dbReference type="MINT" id="Q8WTW4"/>
<dbReference type="STRING" id="9606.ENSP00000232501"/>
<dbReference type="iPTMnet" id="Q8WTW4"/>
<dbReference type="PhosphoSitePlus" id="Q8WTW4"/>
<dbReference type="BioMuta" id="NPRL2"/>
<dbReference type="DMDM" id="47117604"/>
<dbReference type="jPOST" id="Q8WTW4"/>
<dbReference type="MassIVE" id="Q8WTW4"/>
<dbReference type="PaxDb" id="9606-ENSP00000232501"/>
<dbReference type="PeptideAtlas" id="Q8WTW4"/>
<dbReference type="ProteomicsDB" id="74610">
    <molecule id="Q8WTW4-1"/>
</dbReference>
<dbReference type="ProteomicsDB" id="74611">
    <molecule id="Q8WTW4-2"/>
</dbReference>
<dbReference type="Pumba" id="Q8WTW4"/>
<dbReference type="Antibodypedia" id="30939">
    <property type="antibodies" value="284 antibodies from 33 providers"/>
</dbReference>
<dbReference type="DNASU" id="10641"/>
<dbReference type="Ensembl" id="ENST00000232501.8">
    <molecule id="Q8WTW4-1"/>
    <property type="protein sequence ID" value="ENSP00000232501.3"/>
    <property type="gene ID" value="ENSG00000114388.14"/>
</dbReference>
<dbReference type="GeneID" id="10641"/>
<dbReference type="KEGG" id="hsa:10641"/>
<dbReference type="MANE-Select" id="ENST00000232501.8">
    <property type="protein sequence ID" value="ENSP00000232501.3"/>
    <property type="RefSeq nucleotide sequence ID" value="NM_006545.5"/>
    <property type="RefSeq protein sequence ID" value="NP_006536.3"/>
</dbReference>
<dbReference type="UCSC" id="uc003daj.2">
    <molecule id="Q8WTW4-1"/>
    <property type="organism name" value="human"/>
</dbReference>
<dbReference type="AGR" id="HGNC:24969"/>
<dbReference type="CTD" id="10641"/>
<dbReference type="DisGeNET" id="10641"/>
<dbReference type="GeneCards" id="NPRL2"/>
<dbReference type="GeneReviews" id="NPRL2"/>
<dbReference type="HGNC" id="HGNC:24969">
    <property type="gene designation" value="NPRL2"/>
</dbReference>
<dbReference type="HPA" id="ENSG00000114388">
    <property type="expression patterns" value="Low tissue specificity"/>
</dbReference>
<dbReference type="MalaCards" id="NPRL2"/>
<dbReference type="MIM" id="607072">
    <property type="type" value="gene"/>
</dbReference>
<dbReference type="MIM" id="617116">
    <property type="type" value="phenotype"/>
</dbReference>
<dbReference type="neXtProt" id="NX_Q8WTW4"/>
<dbReference type="OpenTargets" id="ENSG00000114388"/>
<dbReference type="Orphanet" id="98820">
    <property type="disease" value="Familial focal epilepsy with variable foci"/>
</dbReference>
<dbReference type="PharmGKB" id="PA165697981"/>
<dbReference type="VEuPathDB" id="HostDB:ENSG00000114388"/>
<dbReference type="eggNOG" id="KOG3789">
    <property type="taxonomic scope" value="Eukaryota"/>
</dbReference>
<dbReference type="GeneTree" id="ENSGT00390000001414"/>
<dbReference type="HOGENOM" id="CLU_014995_0_0_1"/>
<dbReference type="InParanoid" id="Q8WTW4"/>
<dbReference type="OMA" id="IVMHKPD"/>
<dbReference type="OrthoDB" id="338854at2759"/>
<dbReference type="PAN-GO" id="Q8WTW4">
    <property type="GO annotations" value="6 GO annotations based on evolutionary models"/>
</dbReference>
<dbReference type="PhylomeDB" id="Q8WTW4"/>
<dbReference type="TreeFam" id="TF106159"/>
<dbReference type="PathwayCommons" id="Q8WTW4"/>
<dbReference type="Reactome" id="R-HSA-9639288">
    <property type="pathway name" value="Amino acids regulate mTORC1"/>
</dbReference>
<dbReference type="SignaLink" id="Q8WTW4"/>
<dbReference type="SIGNOR" id="Q8WTW4"/>
<dbReference type="BioGRID-ORCS" id="10641">
    <property type="hits" value="48 hits in 1158 CRISPR screens"/>
</dbReference>
<dbReference type="ChiTaRS" id="NPRL2">
    <property type="organism name" value="human"/>
</dbReference>
<dbReference type="GeneWiki" id="TUSC4"/>
<dbReference type="GenomeRNAi" id="10641"/>
<dbReference type="Pharos" id="Q8WTW4">
    <property type="development level" value="Tbio"/>
</dbReference>
<dbReference type="PRO" id="PR:Q8WTW4"/>
<dbReference type="Proteomes" id="UP000005640">
    <property type="component" value="Chromosome 3"/>
</dbReference>
<dbReference type="RNAct" id="Q8WTW4">
    <property type="molecule type" value="protein"/>
</dbReference>
<dbReference type="Bgee" id="ENSG00000114388">
    <property type="expression patterns" value="Expressed in granulocyte and 203 other cell types or tissues"/>
</dbReference>
<dbReference type="ExpressionAtlas" id="Q8WTW4">
    <property type="expression patterns" value="baseline and differential"/>
</dbReference>
<dbReference type="GO" id="GO:1990130">
    <property type="term" value="C:GATOR1 complex"/>
    <property type="evidence" value="ECO:0000314"/>
    <property type="project" value="UniProtKB"/>
</dbReference>
<dbReference type="GO" id="GO:0005765">
    <property type="term" value="C:lysosomal membrane"/>
    <property type="evidence" value="ECO:0000314"/>
    <property type="project" value="UniProtKB"/>
</dbReference>
<dbReference type="GO" id="GO:0005774">
    <property type="term" value="C:vacuolar membrane"/>
    <property type="evidence" value="ECO:0000318"/>
    <property type="project" value="GO_Central"/>
</dbReference>
<dbReference type="GO" id="GO:0005096">
    <property type="term" value="F:GTPase activator activity"/>
    <property type="evidence" value="ECO:0000314"/>
    <property type="project" value="UniProtKB"/>
</dbReference>
<dbReference type="GO" id="GO:0034198">
    <property type="term" value="P:cellular response to amino acid starvation"/>
    <property type="evidence" value="ECO:0000314"/>
    <property type="project" value="UniProtKB"/>
</dbReference>
<dbReference type="GO" id="GO:0033673">
    <property type="term" value="P:negative regulation of kinase activity"/>
    <property type="evidence" value="ECO:0000314"/>
    <property type="project" value="UniProtKB"/>
</dbReference>
<dbReference type="GO" id="GO:1904262">
    <property type="term" value="P:negative regulation of TORC1 signaling"/>
    <property type="evidence" value="ECO:0000314"/>
    <property type="project" value="UniProtKB"/>
</dbReference>
<dbReference type="GO" id="GO:0010508">
    <property type="term" value="P:positive regulation of autophagy"/>
    <property type="evidence" value="ECO:0000318"/>
    <property type="project" value="GO_Central"/>
</dbReference>
<dbReference type="InterPro" id="IPR009348">
    <property type="entry name" value="NPR2-like"/>
</dbReference>
<dbReference type="PANTHER" id="PTHR12991:SF10">
    <property type="entry name" value="GATOR COMPLEX PROTEIN NPRL2"/>
    <property type="match status" value="1"/>
</dbReference>
<dbReference type="PANTHER" id="PTHR12991">
    <property type="entry name" value="NITROGEN PERMEASE REGULATOR 2/TUMOR SUPPRESSOR CANDIDATE 4"/>
    <property type="match status" value="1"/>
</dbReference>
<dbReference type="Pfam" id="PF06218">
    <property type="entry name" value="NPR2"/>
    <property type="match status" value="2"/>
</dbReference>
<comment type="function">
    <text evidence="3 5 7 8 9 11 12">Catalytic component of the GATOR1 complex, a multiprotein complex that functions as an inhibitor of the amino acid-sensing branch of the mTORC1 pathway (PubMed:23723238, PubMed:29590090, PubMed:35338845, PubMed:38006878). In response to amino acid depletion, the GATOR1 complex has GTPase activating protein (GAP) activity and strongly increases GTP hydrolysis by RagA/RRAGA (or RagB/RRAGB) within heterodimeric Rag complexes, thereby turning them into their inactive GDP-bound form, releasing mTORC1 from lysosomal surface and inhibiting mTORC1 signaling (PubMed:23723238, PubMed:29590090, PubMed:35338845). In the presence of abundant amino acids, the GATOR1 complex is ubiquitinated and inhibited by GATOR2 (PubMed:23723238, PubMed:36528027). Within the GATOR1 complex, NPRL2 constitutes the catalytic subunit that mediates the GTPase activator activity and under methionine-sufficient conditions, the GTPase activator activity is inhibited by PRMT1 through methylation and consequently inducing timely mTORC1 activation (PubMed:27173016, PubMed:30651352, PubMed:35338845).</text>
</comment>
<comment type="function">
    <text evidence="1">Suppresses Src-dependent tyrosine phosphorylation and activation of PDPK1 and its downstream signaling (PubMed:18616680). Down-regulates PDPK1 kinase activity by interfering with tyrosine phosphorylation at 'Tyr-9', 'Tyr-373' and 'Tyr-376' residues (PubMed:18616680). May act as a tumor suppressor (PubMed:18616680). Suppresses cell growth and enhances sensitivity to various anticancer drugs (PubMed:18616680).</text>
</comment>
<comment type="subunit">
    <text evidence="1 2 3 7 9 10">Within the GATOR complex, component of the GATOR1 subcomplex, made of DEPDC5, NPRL2 and NPRL3 (PubMed:19521502, PubMed:23723238, PubMed:29590090, PubMed:35338845). GATOR1 mediates the strong interaction of the GATOR complex with small GTPases Rag (RagA/RRAGA, RagB/RRAGB, RagC/RRAGC and/or RagD/RRAGD) heterodimers (PubMed:23723238, PubMed:29590090). GATOR1 interacts with GPR155/LYCHOS; interaction takes place in presence of cholesterol and prevents interaction between GATOR1 and KICSTOR (PubMed:36007018). Interacts with PDPK1 (PubMed:18616680).</text>
</comment>
<comment type="interaction">
    <interactant intactId="EBI-1043552">
        <id>Q8WTW4</id>
    </interactant>
    <interactant intactId="EBI-2650314">
        <id>Q12980</id>
        <label>NPRL3</label>
    </interactant>
    <organismsDiffer>false</organismsDiffer>
    <experiments>9</experiments>
</comment>
<comment type="subcellular location">
    <subcellularLocation>
        <location evidence="6">Lysosome membrane</location>
    </subcellularLocation>
    <text evidence="6">Localization to lysosomes is mediated by the KICSTOR complex and is amino acid-independent.</text>
</comment>
<comment type="alternative products">
    <event type="alternative splicing"/>
    <isoform>
        <id>Q8WTW4-1</id>
        <name>1</name>
        <sequence type="displayed"/>
    </isoform>
    <isoform>
        <id>Q8WTW4-2</id>
        <name>2</name>
        <sequence type="described" ref="VSP_010329 VSP_010330 VSP_010331"/>
    </isoform>
</comment>
<comment type="tissue specificity">
    <text evidence="4 5">Most abundant in skeletal muscle, followed by brain, liver and pancreas, with lower amounts in lung, kidney, placenta and heart. Expressed in the frontal lobe cortex as well as in the temporal, parietal, and occipital lobes (PubMed:26505888, PubMed:27173016). Expressed in most lung cancer cell lines tested.</text>
</comment>
<comment type="domain">
    <text evidence="8">The arginine finger is critical for the GTPase-activating mechanism.</text>
</comment>
<comment type="PTM">
    <text evidence="11">In the presence of abundant amino acids, ubiquitinated at Lys-158 and Lys-357 via 'Lys-6'-linked ubiquitination by the WDR24 component of the GATOR2 complex, thereby inhibiting the GATOR1 complex and promoting mTORC1 activation.</text>
</comment>
<comment type="PTM">
    <text evidence="12">Asymmetric dimethylation at Arg-78 by PRMT1 inhibits the GTPase activator activity of the GATOR1 complex and consequently inducing timely mTORC1 activation under methionine-sufficient conditions.</text>
</comment>
<comment type="disease">
    <text evidence="3">Inactivating mutations and truncating deletions in the genes encoding GATOR1 proteins, including NPRL2, are detected in glioblastoma and ovarian tumors and are associated with loss of heterozygosity events. Inactivation of GATOR1 proteins promotes constitutive localization of mTORC1 to the lysosomal membrane and blocks mTORC1 inactivation following amino acid withdrawal (PubMed:23723238).</text>
</comment>
<comment type="disease" evidence="4 5">
    <disease id="DI-04832">
        <name>Epilepsy, familial focal, with variable foci 2</name>
        <acronym>FFEVF2</acronym>
        <description>An autosomal dominant form of epilepsy characterized by focal seizures arising from different cortical regions, including the temporal, frontal, parietal, and occipital lobes. Seizure types commonly include temporal lobe epilepsy, frontal lobe epilepsy, and nocturnal frontal lobe epilepsy. Some patients may have intellectual disability or autism spectrum disorders. Seizure onset usually occurs in the first or second decades, although later onset has been reported, and there is phenotypic variability within families. A subset of patients have structural brain abnormalities. Penetrance of the disorder is incomplete.</description>
        <dbReference type="MIM" id="617116"/>
    </disease>
    <text>The disease is caused by variants affecting the gene represented in this entry.</text>
</comment>
<comment type="similarity">
    <text evidence="17">Belongs to the NPR2 family.</text>
</comment>
<feature type="chain" id="PRO_0000213319" description="GATOR1 complex protein NPRL2">
    <location>
        <begin position="1"/>
        <end position="380"/>
    </location>
</feature>
<feature type="region of interest" description="Interaction with PDPK1" evidence="1">
    <location>
        <begin position="1"/>
        <end position="133"/>
    </location>
</feature>
<feature type="binding site" evidence="9 23">
    <location>
        <position position="78"/>
    </location>
    <ligand>
        <name>GDP</name>
        <dbReference type="ChEBI" id="CHEBI:58189"/>
    </ligand>
</feature>
<feature type="site" description="Arginine finger" evidence="8">
    <location>
        <position position="124"/>
    </location>
</feature>
<feature type="modified residue" description="Asymmetric dimethylarginine" evidence="12">
    <location>
        <position position="78"/>
    </location>
</feature>
<feature type="cross-link" description="Glycyl lysine isopeptide (Lys-Gly) (interchain with G-Cter in ubiquitin)" evidence="11">
    <location>
        <position position="158"/>
    </location>
</feature>
<feature type="cross-link" description="Glycyl lysine isopeptide (Lys-Gly) (interchain with G-Cter in ubiquitin)" evidence="11">
    <location>
        <position position="357"/>
    </location>
</feature>
<feature type="splice variant" id="VSP_010329" description="In isoform 2." evidence="15 16">
    <location>
        <begin position="1"/>
        <end position="120"/>
    </location>
</feature>
<feature type="splice variant" id="VSP_010330" description="In isoform 2." evidence="15 16">
    <original>KLIQFGLMKNLI</original>
    <variation>SEENLLGHLGVT</variation>
    <location>
        <begin position="312"/>
        <end position="323"/>
    </location>
</feature>
<feature type="splice variant" id="VSP_010331" description="In isoform 2." evidence="15 16">
    <location>
        <begin position="324"/>
        <end position="380"/>
    </location>
</feature>
<feature type="sequence variant" id="VAR_077122" description="In FFEVF2; dbSNP:rs886037965." evidence="4">
    <original>L</original>
    <variation>P</variation>
    <location>
        <position position="105"/>
    </location>
</feature>
<feature type="sequence variant" id="VAR_077123" description="In FFEVF2; uncertain significance." evidence="4">
    <original>T</original>
    <variation>S</variation>
    <location>
        <position position="110"/>
    </location>
</feature>
<feature type="sequence variant" id="VAR_077124" description="In FFEVF2; uncertain significance; dbSNP:rs745518585." evidence="5">
    <original>P</original>
    <variation>H</variation>
    <location>
        <position position="198"/>
    </location>
</feature>
<feature type="sequence variant" id="VAR_077125" description="In FFEVF2; uncertain significance; dbSNP:rs149128231." evidence="4">
    <original>D</original>
    <variation>H</variation>
    <location>
        <position position="214"/>
    </location>
</feature>
<feature type="mutagenesis site" description="In RL1 mutant; abolished ability of the GATOR1 complex to inhibit mTORC1 signaling." evidence="8">
    <original>PTLGP</original>
    <variation>GSGSG</variation>
    <location>
        <begin position="17"/>
        <end position="21"/>
    </location>
</feature>
<feature type="mutagenesis site" description="Abolished GTPase activating protein activity toward RagA/RRAGA." evidence="8">
    <original>G</original>
    <variation>S</variation>
    <location>
        <position position="20"/>
    </location>
</feature>
<feature type="mutagenesis site" description="Abolished GTPase activating protein activity toward RagA/RRAGA." evidence="8 9">
    <original>R</original>
    <variation>A</variation>
    <location>
        <position position="78"/>
    </location>
</feature>
<feature type="mutagenesis site" description="In RL2 mutant; does not affect ability of the GATOR1 complex to inhibit mTORC1 signaling." evidence="8">
    <original>SFVSM</original>
    <variation>GSGSG</variation>
    <location>
        <begin position="117"/>
        <end position="121"/>
    </location>
</feature>
<feature type="mutagenesis site" description="Decreased ubiquitination by the GATOR2 complex." evidence="11">
    <original>K</original>
    <variation>R</variation>
    <location>
        <position position="158"/>
    </location>
</feature>
<feature type="mutagenesis site" description="Does not affect the GTPase activating protein activity of the GATOR1 complex." evidence="8">
    <original>R</original>
    <variation>A</variation>
    <location>
        <position position="279"/>
    </location>
</feature>
<feature type="mutagenesis site" description="Does not affect the GTPase activating protein activity of the GATOR1 complex." evidence="8">
    <original>R</original>
    <variation>A</variation>
    <location>
        <position position="295"/>
    </location>
</feature>
<feature type="mutagenesis site" description="Does not affect the GTPase activating protein activity of the GATOR1 complex." evidence="8">
    <original>R</original>
    <variation>A</variation>
    <location>
        <position position="300"/>
    </location>
</feature>
<feature type="mutagenesis site" description="Does not affect the GTPase activating protein activity of the GATOR1 complex." evidence="8">
    <original>R</original>
    <variation>A</variation>
    <location>
        <position position="311"/>
    </location>
</feature>
<feature type="mutagenesis site" description="Does not affect the GTPase activating protein activity of the GATOR1 complex." evidence="8">
    <original>R</original>
    <variation>A</variation>
    <location>
        <position position="324"/>
    </location>
</feature>
<feature type="mutagenesis site" description="Does not affect ubiquitination by the GATOR2 complex." evidence="11">
    <original>K</original>
    <variation>R</variation>
    <location>
        <position position="328"/>
    </location>
</feature>
<feature type="mutagenesis site" description="Does not affect the GTPase activating protein activity of the GATOR1 complex." evidence="8">
    <original>R</original>
    <variation>A</variation>
    <location>
        <position position="343"/>
    </location>
</feature>
<feature type="mutagenesis site" description="Decreased ubiquitination by the GATOR2 complex." evidence="11">
    <original>K</original>
    <variation>R</variation>
    <location>
        <position position="357"/>
    </location>
</feature>
<feature type="mutagenesis site" description="Does not affect the GTPase activating protein activity of the GATOR1 complex." evidence="8">
    <original>R</original>
    <variation>A</variation>
    <location>
        <position position="368"/>
    </location>
</feature>
<feature type="sequence conflict" description="In Ref. 6; AAH21984." evidence="17" ref="6">
    <original>P</original>
    <variation>L</variation>
    <location>
        <position position="17"/>
    </location>
</feature>
<feature type="strand" evidence="24">
    <location>
        <begin position="9"/>
        <end position="15"/>
    </location>
</feature>
<feature type="strand" evidence="24">
    <location>
        <begin position="17"/>
        <end position="19"/>
    </location>
</feature>
<feature type="strand" evidence="24">
    <location>
        <begin position="21"/>
        <end position="26"/>
    </location>
</feature>
<feature type="helix" evidence="24">
    <location>
        <begin position="34"/>
        <end position="39"/>
    </location>
</feature>
<feature type="turn" evidence="24">
    <location>
        <begin position="42"/>
        <end position="44"/>
    </location>
</feature>
<feature type="turn" evidence="24">
    <location>
        <begin position="48"/>
        <end position="52"/>
    </location>
</feature>
<feature type="strand" evidence="24">
    <location>
        <begin position="56"/>
        <end position="58"/>
    </location>
</feature>
<feature type="strand" evidence="24">
    <location>
        <begin position="60"/>
        <end position="65"/>
    </location>
</feature>
<feature type="strand" evidence="24">
    <location>
        <begin position="74"/>
        <end position="79"/>
    </location>
</feature>
<feature type="strand" evidence="24">
    <location>
        <begin position="83"/>
        <end position="90"/>
    </location>
</feature>
<feature type="strand" evidence="24">
    <location>
        <begin position="96"/>
        <end position="98"/>
    </location>
</feature>
<feature type="helix" evidence="24">
    <location>
        <begin position="99"/>
        <end position="116"/>
    </location>
</feature>
<feature type="turn" evidence="24">
    <location>
        <begin position="118"/>
        <end position="120"/>
    </location>
</feature>
<feature type="helix" evidence="24">
    <location>
        <begin position="122"/>
        <end position="125"/>
    </location>
</feature>
<feature type="helix" evidence="24">
    <location>
        <begin position="128"/>
        <end position="140"/>
    </location>
</feature>
<feature type="strand" evidence="24">
    <location>
        <begin position="141"/>
        <end position="148"/>
    </location>
</feature>
<feature type="strand" evidence="24">
    <location>
        <begin position="150"/>
        <end position="152"/>
    </location>
</feature>
<feature type="strand" evidence="24">
    <location>
        <begin position="154"/>
        <end position="158"/>
    </location>
</feature>
<feature type="strand" evidence="24">
    <location>
        <begin position="174"/>
        <end position="179"/>
    </location>
</feature>
<feature type="helix" evidence="24">
    <location>
        <begin position="181"/>
        <end position="183"/>
    </location>
</feature>
<feature type="helix" evidence="24">
    <location>
        <begin position="186"/>
        <end position="188"/>
    </location>
</feature>
<feature type="helix" evidence="24">
    <location>
        <begin position="191"/>
        <end position="196"/>
    </location>
</feature>
<feature type="helix" evidence="24">
    <location>
        <begin position="197"/>
        <end position="199"/>
    </location>
</feature>
<feature type="turn" evidence="24">
    <location>
        <begin position="201"/>
        <end position="203"/>
    </location>
</feature>
<feature type="helix" evidence="24">
    <location>
        <begin position="206"/>
        <end position="212"/>
    </location>
</feature>
<feature type="helix" evidence="24">
    <location>
        <begin position="217"/>
        <end position="229"/>
    </location>
</feature>
<feature type="strand" evidence="24">
    <location>
        <begin position="232"/>
        <end position="236"/>
    </location>
</feature>
<feature type="strand" evidence="24">
    <location>
        <begin position="244"/>
        <end position="247"/>
    </location>
</feature>
<feature type="helix" evidence="24">
    <location>
        <begin position="249"/>
        <end position="251"/>
    </location>
</feature>
<feature type="helix" evidence="24">
    <location>
        <begin position="252"/>
        <end position="255"/>
    </location>
</feature>
<feature type="helix" evidence="24">
    <location>
        <begin position="258"/>
        <end position="267"/>
    </location>
</feature>
<feature type="helix" evidence="24">
    <location>
        <begin position="278"/>
        <end position="286"/>
    </location>
</feature>
<feature type="helix" evidence="24">
    <location>
        <begin position="294"/>
        <end position="300"/>
    </location>
</feature>
<feature type="strand" evidence="24">
    <location>
        <begin position="306"/>
        <end position="308"/>
    </location>
</feature>
<feature type="helix" evidence="24">
    <location>
        <begin position="310"/>
        <end position="319"/>
    </location>
</feature>
<feature type="strand" evidence="24">
    <location>
        <begin position="322"/>
        <end position="329"/>
    </location>
</feature>
<feature type="helix" evidence="24">
    <location>
        <begin position="351"/>
        <end position="357"/>
    </location>
</feature>
<feature type="helix" evidence="24">
    <location>
        <begin position="362"/>
        <end position="369"/>
    </location>
</feature>
<feature type="strand" evidence="24">
    <location>
        <begin position="373"/>
        <end position="375"/>
    </location>
</feature>
<feature type="strand" evidence="24">
    <location>
        <begin position="378"/>
        <end position="380"/>
    </location>
</feature>
<accession>Q8WTW4</accession>
<accession>A8K831</accession>
<accession>Q6FGS2</accession>
<accession>Q9Y249</accession>
<accession>Q9Y497</accession>
<evidence type="ECO:0000269" key="1">
    <source>
    </source>
</evidence>
<evidence type="ECO:0000269" key="2">
    <source>
    </source>
</evidence>
<evidence type="ECO:0000269" key="3">
    <source>
    </source>
</evidence>
<evidence type="ECO:0000269" key="4">
    <source>
    </source>
</evidence>
<evidence type="ECO:0000269" key="5">
    <source>
    </source>
</evidence>
<evidence type="ECO:0000269" key="6">
    <source>
    </source>
</evidence>
<evidence type="ECO:0000269" key="7">
    <source>
    </source>
</evidence>
<evidence type="ECO:0000269" key="8">
    <source>
    </source>
</evidence>
<evidence type="ECO:0000269" key="9">
    <source>
    </source>
</evidence>
<evidence type="ECO:0000269" key="10">
    <source>
    </source>
</evidence>
<evidence type="ECO:0000269" key="11">
    <source>
    </source>
</evidence>
<evidence type="ECO:0000269" key="12">
    <source>
    </source>
</evidence>
<evidence type="ECO:0000303" key="13">
    <source>
    </source>
</evidence>
<evidence type="ECO:0000303" key="14">
    <source>
    </source>
</evidence>
<evidence type="ECO:0000303" key="15">
    <source ref="1"/>
</evidence>
<evidence type="ECO:0000303" key="16">
    <source ref="3"/>
</evidence>
<evidence type="ECO:0000305" key="17"/>
<evidence type="ECO:0000312" key="18">
    <source>
        <dbReference type="HGNC" id="HGNC:24969"/>
    </source>
</evidence>
<evidence type="ECO:0007744" key="19">
    <source>
        <dbReference type="PDB" id="6CES"/>
    </source>
</evidence>
<evidence type="ECO:0007744" key="20">
    <source>
        <dbReference type="PDB" id="6CET"/>
    </source>
</evidence>
<evidence type="ECO:0007744" key="21">
    <source>
        <dbReference type="PDB" id="7T3A"/>
    </source>
</evidence>
<evidence type="ECO:0007744" key="22">
    <source>
        <dbReference type="PDB" id="7T3B"/>
    </source>
</evidence>
<evidence type="ECO:0007744" key="23">
    <source>
        <dbReference type="PDB" id="7T3C"/>
    </source>
</evidence>
<evidence type="ECO:0007829" key="24">
    <source>
        <dbReference type="PDB" id="8FW5"/>
    </source>
</evidence>
<reference key="1">
    <citation type="submission" date="1998-10" db="EMBL/GenBank/DDBJ databases">
        <title>Gene 21, a new candidate human tumor suppressor gene located in the 3p21.3 small cell lung cancer homozygous deletion region homologous to the yeast nitrogen permease regulator NPR2.</title>
        <authorList>
            <person name="Kondo M."/>
            <person name="Sekido Y."/>
            <person name="Latif F."/>
            <person name="Cundiff S."/>
            <person name="Duh F.-M."/>
            <person name="Wei M.-H."/>
            <person name="Lerman M.I."/>
            <person name="Minna J.D."/>
        </authorList>
    </citation>
    <scope>NUCLEOTIDE SEQUENCE [MRNA] (ISOFORMS 1 AND 2)</scope>
</reference>
<reference key="2">
    <citation type="journal article" date="2004" name="Nat. Genet.">
        <title>Complete sequencing and characterization of 21,243 full-length human cDNAs.</title>
        <authorList>
            <person name="Ota T."/>
            <person name="Suzuki Y."/>
            <person name="Nishikawa T."/>
            <person name="Otsuki T."/>
            <person name="Sugiyama T."/>
            <person name="Irie R."/>
            <person name="Wakamatsu A."/>
            <person name="Hayashi K."/>
            <person name="Sato H."/>
            <person name="Nagai K."/>
            <person name="Kimura K."/>
            <person name="Makita H."/>
            <person name="Sekine M."/>
            <person name="Obayashi M."/>
            <person name="Nishi T."/>
            <person name="Shibahara T."/>
            <person name="Tanaka T."/>
            <person name="Ishii S."/>
            <person name="Yamamoto J."/>
            <person name="Saito K."/>
            <person name="Kawai Y."/>
            <person name="Isono Y."/>
            <person name="Nakamura Y."/>
            <person name="Nagahari K."/>
            <person name="Murakami K."/>
            <person name="Yasuda T."/>
            <person name="Iwayanagi T."/>
            <person name="Wagatsuma M."/>
            <person name="Shiratori A."/>
            <person name="Sudo H."/>
            <person name="Hosoiri T."/>
            <person name="Kaku Y."/>
            <person name="Kodaira H."/>
            <person name="Kondo H."/>
            <person name="Sugawara M."/>
            <person name="Takahashi M."/>
            <person name="Kanda K."/>
            <person name="Yokoi T."/>
            <person name="Furuya T."/>
            <person name="Kikkawa E."/>
            <person name="Omura Y."/>
            <person name="Abe K."/>
            <person name="Kamihara K."/>
            <person name="Katsuta N."/>
            <person name="Sato K."/>
            <person name="Tanikawa M."/>
            <person name="Yamazaki M."/>
            <person name="Ninomiya K."/>
            <person name="Ishibashi T."/>
            <person name="Yamashita H."/>
            <person name="Murakawa K."/>
            <person name="Fujimori K."/>
            <person name="Tanai H."/>
            <person name="Kimata M."/>
            <person name="Watanabe M."/>
            <person name="Hiraoka S."/>
            <person name="Chiba Y."/>
            <person name="Ishida S."/>
            <person name="Ono Y."/>
            <person name="Takiguchi S."/>
            <person name="Watanabe S."/>
            <person name="Yosida M."/>
            <person name="Hotuta T."/>
            <person name="Kusano J."/>
            <person name="Kanehori K."/>
            <person name="Takahashi-Fujii A."/>
            <person name="Hara H."/>
            <person name="Tanase T.-O."/>
            <person name="Nomura Y."/>
            <person name="Togiya S."/>
            <person name="Komai F."/>
            <person name="Hara R."/>
            <person name="Takeuchi K."/>
            <person name="Arita M."/>
            <person name="Imose N."/>
            <person name="Musashino K."/>
            <person name="Yuuki H."/>
            <person name="Oshima A."/>
            <person name="Sasaki N."/>
            <person name="Aotsuka S."/>
            <person name="Yoshikawa Y."/>
            <person name="Matsunawa H."/>
            <person name="Ichihara T."/>
            <person name="Shiohata N."/>
            <person name="Sano S."/>
            <person name="Moriya S."/>
            <person name="Momiyama H."/>
            <person name="Satoh N."/>
            <person name="Takami S."/>
            <person name="Terashima Y."/>
            <person name="Suzuki O."/>
            <person name="Nakagawa S."/>
            <person name="Senoh A."/>
            <person name="Mizoguchi H."/>
            <person name="Goto Y."/>
            <person name="Shimizu F."/>
            <person name="Wakebe H."/>
            <person name="Hishigaki H."/>
            <person name="Watanabe T."/>
            <person name="Sugiyama A."/>
            <person name="Takemoto M."/>
            <person name="Kawakami B."/>
            <person name="Yamazaki M."/>
            <person name="Watanabe K."/>
            <person name="Kumagai A."/>
            <person name="Itakura S."/>
            <person name="Fukuzumi Y."/>
            <person name="Fujimori Y."/>
            <person name="Komiyama M."/>
            <person name="Tashiro H."/>
            <person name="Tanigami A."/>
            <person name="Fujiwara T."/>
            <person name="Ono T."/>
            <person name="Yamada K."/>
            <person name="Fujii Y."/>
            <person name="Ozaki K."/>
            <person name="Hirao M."/>
            <person name="Ohmori Y."/>
            <person name="Kawabata A."/>
            <person name="Hikiji T."/>
            <person name="Kobatake N."/>
            <person name="Inagaki H."/>
            <person name="Ikema Y."/>
            <person name="Okamoto S."/>
            <person name="Okitani R."/>
            <person name="Kawakami T."/>
            <person name="Noguchi S."/>
            <person name="Itoh T."/>
            <person name="Shigeta K."/>
            <person name="Senba T."/>
            <person name="Matsumura K."/>
            <person name="Nakajima Y."/>
            <person name="Mizuno T."/>
            <person name="Morinaga M."/>
            <person name="Sasaki M."/>
            <person name="Togashi T."/>
            <person name="Oyama M."/>
            <person name="Hata H."/>
            <person name="Watanabe M."/>
            <person name="Komatsu T."/>
            <person name="Mizushima-Sugano J."/>
            <person name="Satoh T."/>
            <person name="Shirai Y."/>
            <person name="Takahashi Y."/>
            <person name="Nakagawa K."/>
            <person name="Okumura K."/>
            <person name="Nagase T."/>
            <person name="Nomura N."/>
            <person name="Kikuchi H."/>
            <person name="Masuho Y."/>
            <person name="Yamashita R."/>
            <person name="Nakai K."/>
            <person name="Yada T."/>
            <person name="Nakamura Y."/>
            <person name="Ohara O."/>
            <person name="Isogai T."/>
            <person name="Sugano S."/>
        </authorList>
    </citation>
    <scope>NUCLEOTIDE SEQUENCE [LARGE SCALE MRNA] (ISOFORM 1)</scope>
    <source>
        <tissue>Colon</tissue>
    </source>
</reference>
<reference key="3">
    <citation type="submission" date="2004-06" db="EMBL/GenBank/DDBJ databases">
        <title>Cloning of human full open reading frames in Gateway(TM) system entry vector (pDONR201).</title>
        <authorList>
            <person name="Ebert L."/>
            <person name="Schick M."/>
            <person name="Neubert P."/>
            <person name="Schatten R."/>
            <person name="Henze S."/>
            <person name="Korn B."/>
        </authorList>
    </citation>
    <scope>NUCLEOTIDE SEQUENCE [LARGE SCALE MRNA] (ISOFORM 2)</scope>
</reference>
<reference key="4">
    <citation type="journal article" date="2006" name="Nature">
        <title>The DNA sequence, annotation and analysis of human chromosome 3.</title>
        <authorList>
            <person name="Muzny D.M."/>
            <person name="Scherer S.E."/>
            <person name="Kaul R."/>
            <person name="Wang J."/>
            <person name="Yu J."/>
            <person name="Sudbrak R."/>
            <person name="Buhay C.J."/>
            <person name="Chen R."/>
            <person name="Cree A."/>
            <person name="Ding Y."/>
            <person name="Dugan-Rocha S."/>
            <person name="Gill R."/>
            <person name="Gunaratne P."/>
            <person name="Harris R.A."/>
            <person name="Hawes A.C."/>
            <person name="Hernandez J."/>
            <person name="Hodgson A.V."/>
            <person name="Hume J."/>
            <person name="Jackson A."/>
            <person name="Khan Z.M."/>
            <person name="Kovar-Smith C."/>
            <person name="Lewis L.R."/>
            <person name="Lozado R.J."/>
            <person name="Metzker M.L."/>
            <person name="Milosavljevic A."/>
            <person name="Miner G.R."/>
            <person name="Morgan M.B."/>
            <person name="Nazareth L.V."/>
            <person name="Scott G."/>
            <person name="Sodergren E."/>
            <person name="Song X.-Z."/>
            <person name="Steffen D."/>
            <person name="Wei S."/>
            <person name="Wheeler D.A."/>
            <person name="Wright M.W."/>
            <person name="Worley K.C."/>
            <person name="Yuan Y."/>
            <person name="Zhang Z."/>
            <person name="Adams C.Q."/>
            <person name="Ansari-Lari M.A."/>
            <person name="Ayele M."/>
            <person name="Brown M.J."/>
            <person name="Chen G."/>
            <person name="Chen Z."/>
            <person name="Clendenning J."/>
            <person name="Clerc-Blankenburg K.P."/>
            <person name="Chen R."/>
            <person name="Chen Z."/>
            <person name="Davis C."/>
            <person name="Delgado O."/>
            <person name="Dinh H.H."/>
            <person name="Dong W."/>
            <person name="Draper H."/>
            <person name="Ernst S."/>
            <person name="Fu G."/>
            <person name="Gonzalez-Garay M.L."/>
            <person name="Garcia D.K."/>
            <person name="Gillett W."/>
            <person name="Gu J."/>
            <person name="Hao B."/>
            <person name="Haugen E."/>
            <person name="Havlak P."/>
            <person name="He X."/>
            <person name="Hennig S."/>
            <person name="Hu S."/>
            <person name="Huang W."/>
            <person name="Jackson L.R."/>
            <person name="Jacob L.S."/>
            <person name="Kelly S.H."/>
            <person name="Kube M."/>
            <person name="Levy R."/>
            <person name="Li Z."/>
            <person name="Liu B."/>
            <person name="Liu J."/>
            <person name="Liu W."/>
            <person name="Lu J."/>
            <person name="Maheshwari M."/>
            <person name="Nguyen B.-V."/>
            <person name="Okwuonu G.O."/>
            <person name="Palmeiri A."/>
            <person name="Pasternak S."/>
            <person name="Perez L.M."/>
            <person name="Phelps K.A."/>
            <person name="Plopper F.J."/>
            <person name="Qiang B."/>
            <person name="Raymond C."/>
            <person name="Rodriguez R."/>
            <person name="Saenphimmachak C."/>
            <person name="Santibanez J."/>
            <person name="Shen H."/>
            <person name="Shen Y."/>
            <person name="Subramanian S."/>
            <person name="Tabor P.E."/>
            <person name="Verduzco D."/>
            <person name="Waldron L."/>
            <person name="Wang J."/>
            <person name="Wang J."/>
            <person name="Wang Q."/>
            <person name="Williams G.A."/>
            <person name="Wong G.K.-S."/>
            <person name="Yao Z."/>
            <person name="Zhang J."/>
            <person name="Zhang X."/>
            <person name="Zhao G."/>
            <person name="Zhou J."/>
            <person name="Zhou Y."/>
            <person name="Nelson D."/>
            <person name="Lehrach H."/>
            <person name="Reinhardt R."/>
            <person name="Naylor S.L."/>
            <person name="Yang H."/>
            <person name="Olson M."/>
            <person name="Weinstock G."/>
            <person name="Gibbs R.A."/>
        </authorList>
    </citation>
    <scope>NUCLEOTIDE SEQUENCE [LARGE SCALE GENOMIC DNA]</scope>
</reference>
<reference key="5">
    <citation type="submission" date="2005-07" db="EMBL/GenBank/DDBJ databases">
        <authorList>
            <person name="Mural R.J."/>
            <person name="Istrail S."/>
            <person name="Sutton G.G."/>
            <person name="Florea L."/>
            <person name="Halpern A.L."/>
            <person name="Mobarry C.M."/>
            <person name="Lippert R."/>
            <person name="Walenz B."/>
            <person name="Shatkay H."/>
            <person name="Dew I."/>
            <person name="Miller J.R."/>
            <person name="Flanigan M.J."/>
            <person name="Edwards N.J."/>
            <person name="Bolanos R."/>
            <person name="Fasulo D."/>
            <person name="Halldorsson B.V."/>
            <person name="Hannenhalli S."/>
            <person name="Turner R."/>
            <person name="Yooseph S."/>
            <person name="Lu F."/>
            <person name="Nusskern D.R."/>
            <person name="Shue B.C."/>
            <person name="Zheng X.H."/>
            <person name="Zhong F."/>
            <person name="Delcher A.L."/>
            <person name="Huson D.H."/>
            <person name="Kravitz S.A."/>
            <person name="Mouchard L."/>
            <person name="Reinert K."/>
            <person name="Remington K.A."/>
            <person name="Clark A.G."/>
            <person name="Waterman M.S."/>
            <person name="Eichler E.E."/>
            <person name="Adams M.D."/>
            <person name="Hunkapiller M.W."/>
            <person name="Myers E.W."/>
            <person name="Venter J.C."/>
        </authorList>
    </citation>
    <scope>NUCLEOTIDE SEQUENCE [LARGE SCALE GENOMIC DNA]</scope>
</reference>
<reference key="6">
    <citation type="journal article" date="2004" name="Genome Res.">
        <title>The status, quality, and expansion of the NIH full-length cDNA project: the Mammalian Gene Collection (MGC).</title>
        <authorList>
            <consortium name="The MGC Project Team"/>
        </authorList>
    </citation>
    <scope>NUCLEOTIDE SEQUENCE [LARGE SCALE MRNA] (ISOFORM 1)</scope>
    <source>
        <tissue>Kidney</tissue>
        <tissue>Skin</tissue>
    </source>
</reference>
<reference key="7">
    <citation type="journal article" date="2000" name="Cancer Res.">
        <title>The 630-kb lung cancer homozygous deletion region on human chromosome 3p21.3: identification and evaluation of the resident candidate tumor suppressor genes.</title>
        <authorList>
            <consortium name="The international lung cancer chromosome 3p21.3 tumor suppressor gene consortium"/>
            <person name="Lerman M.I."/>
            <person name="Minna J.D."/>
        </authorList>
    </citation>
    <scope>DISCUSSION OF SEQUENCE</scope>
</reference>
<reference key="8">
    <citation type="journal article" date="2002" name="Cancer Res.">
        <title>Expression of several genes in the human chromosome 3p21.3 homozygous deletion region by an adenovirus vector results in tumor suppressor activities in vitro and in vivo.</title>
        <authorList>
            <person name="Ji L."/>
            <person name="Nishizaki M."/>
            <person name="Gao B."/>
            <person name="Burbee D."/>
            <person name="Kondo M."/>
            <person name="Kamibayashi C."/>
            <person name="Xu K."/>
            <person name="Yen N."/>
            <person name="Atkinson E.N."/>
            <person name="Fang B."/>
            <person name="Lerman M.I."/>
            <person name="Roth J.A."/>
            <person name="Minna J.D."/>
        </authorList>
    </citation>
    <scope>DISCUSSION OF SEQUENCE</scope>
</reference>
<reference key="9">
    <citation type="journal article" date="2008" name="Cancer Sci.">
        <title>TUSC4/NPRL2, a novel PDK1-interacting protein, inhibits PDK1 tyrosine phosphorylation and its downstream signaling.</title>
        <authorList>
            <person name="Kurata A."/>
            <person name="Katayama R."/>
            <person name="Watanabe T."/>
            <person name="Tsuruo T."/>
            <person name="Fujita N."/>
        </authorList>
    </citation>
    <scope>FUNCTION</scope>
    <scope>INTERACTION WITH PDPK1</scope>
</reference>
<reference key="10">
    <citation type="journal article" date="2009" name="PLoS Genet.">
        <title>A genome-wide screen for regulators of TORC1 in response to amino acid starvation reveals a conserved Npr2/3 complex.</title>
        <authorList>
            <person name="Neklesa T.K."/>
            <person name="Davis R.W."/>
        </authorList>
    </citation>
    <scope>INTERACTION WITH NPRL3</scope>
</reference>
<reference key="11">
    <citation type="journal article" date="2013" name="Science">
        <title>A Tumor suppressor complex with GAP activity for the Rag GTPases that signal amino acid sufficiency to mTORC1.</title>
        <authorList>
            <person name="Bar-Peled L."/>
            <person name="Chantranupong L."/>
            <person name="Cherniack A.D."/>
            <person name="Chen W.W."/>
            <person name="Ottina K.A."/>
            <person name="Grabiner B.C."/>
            <person name="Spear E.D."/>
            <person name="Carter S.L."/>
            <person name="Meyerson M."/>
            <person name="Sabatini D.M."/>
        </authorList>
    </citation>
    <scope>FUNCTION</scope>
    <scope>IDENTIFICATION IN GATOR COMPLEX</scope>
    <scope>INTERACTION WITH RRAG PROTEINS</scope>
</reference>
<reference key="12">
    <citation type="journal article" date="2017" name="Nature">
        <title>KICSTOR recruits GATOR1 to the lysosome and is necessary for nutrients to regulate mTORC1.</title>
        <authorList>
            <person name="Wolfson R.L."/>
            <person name="Chantranupong L."/>
            <person name="Wyant G.A."/>
            <person name="Gu X."/>
            <person name="Orozco J.M."/>
            <person name="Shen K."/>
            <person name="Condon K.J."/>
            <person name="Petri S."/>
            <person name="Kedir J."/>
            <person name="Scaria S.M."/>
            <person name="Abu-Remaileh M."/>
            <person name="Frankel W.N."/>
            <person name="Sabatini D.M."/>
        </authorList>
    </citation>
    <scope>SUBCELLULAR LOCATION</scope>
</reference>
<reference key="13">
    <citation type="journal article" date="2019" name="J. Biol. Chem.">
        <title>Arg-78 of Nprl2 catalyzes GATOR1-stimulated GTP hydrolysis by the Rag GTPases.</title>
        <authorList>
            <person name="Shen K."/>
            <person name="Valenstein M.L."/>
            <person name="Gu X."/>
            <person name="Sabatini D.M."/>
        </authorList>
    </citation>
    <scope>FUNCTION</scope>
    <scope>ARGININE FINGER</scope>
    <scope>DOMAIN</scope>
    <scope>MUTAGENESIS OF 17-PRO--PRO-21; GLY-20; ARG-78; 117-SER--MET-121; ARG-279; ARG-295; ARG-300; ARG-311; ARG-324; ARG-343 AND ARG-368</scope>
</reference>
<reference key="14">
    <citation type="journal article" date="2022" name="Science">
        <title>Lysosomal GPCR-like protein LYCHOS signals cholesterol sufficiency to mTORC1.</title>
        <authorList>
            <person name="Shin H.R."/>
            <person name="Citron Y.R."/>
            <person name="Wang L."/>
            <person name="Tribouillard L."/>
            <person name="Goul C.S."/>
            <person name="Stipp R."/>
            <person name="Sugasawa Y."/>
            <person name="Jain A."/>
            <person name="Samson N."/>
            <person name="Lim C.Y."/>
            <person name="Davis O.B."/>
            <person name="Castaneda-Carpio D."/>
            <person name="Qian M."/>
            <person name="Nomura D.K."/>
            <person name="Perera R.M."/>
            <person name="Park E."/>
            <person name="Covey D.F."/>
            <person name="Laplante M."/>
            <person name="Evers A.S."/>
            <person name="Zoncu R."/>
        </authorList>
    </citation>
    <scope>INTERACTION WITH GPR155</scope>
</reference>
<reference key="15">
    <citation type="journal article" date="2023" name="Mol. Cell">
        <title>Ring domains are essential for GATOR2-dependent mTORC1 activation.</title>
        <authorList>
            <person name="Jiang C."/>
            <person name="Dai X."/>
            <person name="He S."/>
            <person name="Zhou H."/>
            <person name="Fang L."/>
            <person name="Guo J."/>
            <person name="Liu S."/>
            <person name="Zhang T."/>
            <person name="Pan W."/>
            <person name="Yu H."/>
            <person name="Fu T."/>
            <person name="Li D."/>
            <person name="Inuzuka H."/>
            <person name="Wang P."/>
            <person name="Xiao J."/>
            <person name="Wei W."/>
        </authorList>
    </citation>
    <scope>FUNCTION</scope>
    <scope>UBIQUITINATION AT LYS-158 AND LYS-357</scope>
    <scope>MUTAGENESIS OF LYS-158; LYS-328 AND LYS-357</scope>
</reference>
<reference key="16">
    <citation type="journal article" date="2023" name="Cell Metab.">
        <title>PRMT1 orchestrates with SAMTOR to govern mTORC1 methionine sensing via Arg-methylation of NPRL2.</title>
        <authorList>
            <person name="Jiang C."/>
            <person name="Liu J."/>
            <person name="He S."/>
            <person name="Xu W."/>
            <person name="Huang R."/>
            <person name="Pan W."/>
            <person name="Li X."/>
            <person name="Dai X."/>
            <person name="Guo J."/>
            <person name="Zhang T."/>
            <person name="Inuzuka H."/>
            <person name="Wang P."/>
            <person name="Asara J.M."/>
            <person name="Xiao J."/>
            <person name="Wei W."/>
        </authorList>
    </citation>
    <scope>FUNCTION</scope>
    <scope>METHYLATION AT ARG-78</scope>
</reference>
<reference evidence="19 20" key="17">
    <citation type="journal article" date="2018" name="Nature">
        <title>Architecture of the human GATOR1 and GATOR1-Rag GTPases complexes.</title>
        <authorList>
            <person name="Shen K."/>
            <person name="Huang R.K."/>
            <person name="Brignole E.J."/>
            <person name="Condon K.J."/>
            <person name="Valenstein M.L."/>
            <person name="Chantranupong L."/>
            <person name="Bomaliyamu A."/>
            <person name="Choe A."/>
            <person name="Hong C."/>
            <person name="Yu Z."/>
            <person name="Sabatini D.M."/>
        </authorList>
    </citation>
    <scope>STRUCTURE BY ELECTRON MICROSCOPY (4.00 ANGSTROMS) IN COMPLEX WITH RRAGA; RRAGC; DEPDC5 AND NPRL3</scope>
    <scope>FUNCTION</scope>
    <scope>IDENTIFICATION IN GATOR1 COMPLEX</scope>
</reference>
<reference evidence="21 22 23" key="18">
    <citation type="journal article" date="2022" name="Mol. Cell">
        <title>Cryo-EM structures of the human GATOR1-Rag-Ragulator complex reveal a spatial-constraint regulated GAP mechanism.</title>
        <authorList>
            <person name="Egri S.B."/>
            <person name="Ouch C."/>
            <person name="Chou H.T."/>
            <person name="Yu Z."/>
            <person name="Song K."/>
            <person name="Xu C."/>
            <person name="Shen K."/>
        </authorList>
    </citation>
    <scope>STRUCTURE BY ELECTRON MICROSCOPY (3.90 ANGSTROMS) IN COMPLEX WITH RRAGA; RRAGC; DEPDC5; NPRL3; LAMTOR1; LAMTOR2; LAMTOR3; LAMTOR4 AND LAMTOR5</scope>
    <scope>FUNCTION</scope>
    <scope>IDENTIFICATION IN GATOR1 COMPLEX</scope>
    <scope>MUTAGENESIS OF ARG-78</scope>
</reference>
<reference key="19">
    <citation type="journal article" date="2016" name="Ann. Neurol.">
        <title>Mutations in the mammalian target of rapamycin pathway regulators NPRL2 and NPRL3 cause focal epilepsy.</title>
        <authorList>
            <consortium name="Epilepsy Electroclinical Study Group"/>
            <person name="Ricos M.G."/>
            <person name="Hodgson B.L."/>
            <person name="Pippucci T."/>
            <person name="Saidin A."/>
            <person name="Ong Y.S."/>
            <person name="Heron S.E."/>
            <person name="Licchetta L."/>
            <person name="Bisulli F."/>
            <person name="Bayly M.A."/>
            <person name="Hughes J."/>
            <person name="Baldassari S."/>
            <person name="Palombo F."/>
            <person name="Santucci M."/>
            <person name="Meletti S."/>
            <person name="Berkovic S.F."/>
            <person name="Rubboli G."/>
            <person name="Thomas P.Q."/>
            <person name="Scheffer I.E."/>
            <person name="Tinuper P."/>
            <person name="Geoghegan J."/>
            <person name="Schreiber A.W."/>
            <person name="Dibbens L.M."/>
        </authorList>
    </citation>
    <scope>INVOLVEMENT IN FFEVF2</scope>
    <scope>VARIANTS FFEVF2 PRO-105; SER-110 AND HIS-214</scope>
    <scope>TISSUE SPECIFICITY</scope>
</reference>
<reference key="20">
    <citation type="journal article" date="2016" name="Epilepsia">
        <title>Involvement of GATOR complex genes in familial focal epilepsies and focal cortical dysplasia.</title>
        <authorList>
            <person name="Weckhuysen S."/>
            <person name="Marsan E."/>
            <person name="Lambrecq V."/>
            <person name="Marchal C."/>
            <person name="Morin-Brureau M."/>
            <person name="An-Gourfinkel I."/>
            <person name="Baulac M."/>
            <person name="Fohlen M."/>
            <person name="Kallay Zetchi C."/>
            <person name="Seeck M."/>
            <person name="de la Grange P."/>
            <person name="Dermaut B."/>
            <person name="Meurs A."/>
            <person name="Thomas P."/>
            <person name="Chassoux F."/>
            <person name="Leguern E."/>
            <person name="Picard F."/>
            <person name="Baulac S."/>
        </authorList>
    </citation>
    <scope>INVOLVEMENT IN FFEVF2</scope>
    <scope>VARIANT FFEVF2 HIS-198</scope>
    <scope>TISSUE SPECIFICITY</scope>
</reference>
<keyword id="KW-0002">3D-structure</keyword>
<keyword id="KW-0025">Alternative splicing</keyword>
<keyword id="KW-0225">Disease variant</keyword>
<keyword id="KW-0887">Epilepsy</keyword>
<keyword id="KW-0343">GTPase activation</keyword>
<keyword id="KW-1017">Isopeptide bond</keyword>
<keyword id="KW-0458">Lysosome</keyword>
<keyword id="KW-0472">Membrane</keyword>
<keyword id="KW-0488">Methylation</keyword>
<keyword id="KW-1267">Proteomics identification</keyword>
<keyword id="KW-1185">Reference proteome</keyword>
<keyword id="KW-0043">Tumor suppressor</keyword>
<keyword id="KW-0832">Ubl conjugation</keyword>
<organism>
    <name type="scientific">Homo sapiens</name>
    <name type="common">Human</name>
    <dbReference type="NCBI Taxonomy" id="9606"/>
    <lineage>
        <taxon>Eukaryota</taxon>
        <taxon>Metazoa</taxon>
        <taxon>Chordata</taxon>
        <taxon>Craniata</taxon>
        <taxon>Vertebrata</taxon>
        <taxon>Euteleostomi</taxon>
        <taxon>Mammalia</taxon>
        <taxon>Eutheria</taxon>
        <taxon>Euarchontoglires</taxon>
        <taxon>Primates</taxon>
        <taxon>Haplorrhini</taxon>
        <taxon>Catarrhini</taxon>
        <taxon>Hominidae</taxon>
        <taxon>Homo</taxon>
    </lineage>
</organism>
<protein>
    <recommendedName>
        <fullName evidence="17">GATOR1 complex protein NPRL2</fullName>
    </recommendedName>
    <alternativeName>
        <fullName evidence="15">Gene 21 protein</fullName>
        <shortName evidence="15">G21 protein</shortName>
    </alternativeName>
    <alternativeName>
        <fullName evidence="13">Nitrogen permease regulator 2-like protein</fullName>
        <shortName evidence="13">NPR2-like protein</shortName>
    </alternativeName>
    <alternativeName>
        <fullName evidence="14">Tumor suppressor candidate 4</fullName>
    </alternativeName>
</protein>
<sequence>MGSGCRIECIFFSEFHPTLGPKITYQVPEDFISRELFDTVQVYIITKPELQNKLITVTAMEKKLIGCPVCIEHKKYSRNALLFNLGFVCDAQAKTCALEPIVKKLAGYLTTLELESSFVSMEESKQKLVPIMTILLEELNASGRCTLPIDESNTIHLKVIEQRPDPPVAQEYDVPVFTKDKEDFFNSQWDLTTQQILPYIDGFRHIQKISAEADVELNLVRIAIQNLLYYGVVTLVSILQYSNVYCPTPKVQDLVDDKSLQEACLSYVTKQGHKRASLRDVFQLYCSLSPGTTVRDLIGRHPQQLQHVDERKLIQFGLMKNLIRRLQKYPVRVTREEQSHPARLYTGCHSYDEICCKTGMSYHELDERLENDPNIIICWK</sequence>
<name>NPRL2_HUMAN</name>
<gene>
    <name evidence="14 18" type="primary">NPRL2</name>
    <name evidence="14" type="synonym">TUSC4</name>
</gene>